<evidence type="ECO:0000255" key="1"/>
<evidence type="ECO:0000255" key="2">
    <source>
        <dbReference type="PROSITE-ProRule" id="PRU00208"/>
    </source>
</evidence>
<evidence type="ECO:0000305" key="3"/>
<comment type="function">
    <text evidence="3">An RNase.</text>
</comment>
<comment type="cofactor">
    <cofactor evidence="3">
        <name>Mg(2+)</name>
        <dbReference type="ChEBI" id="CHEBI:18420"/>
    </cofactor>
</comment>
<comment type="similarity">
    <text evidence="3">Belongs to the ycf81 family.</text>
</comment>
<comment type="similarity">
    <text evidence="3">In the central section; belongs to the PINc/VapC protein family.</text>
</comment>
<organism>
    <name type="scientific">Synechocystis sp. (strain ATCC 27184 / PCC 6803 / Kazusa)</name>
    <dbReference type="NCBI Taxonomy" id="1111708"/>
    <lineage>
        <taxon>Bacteria</taxon>
        <taxon>Bacillati</taxon>
        <taxon>Cyanobacteriota</taxon>
        <taxon>Cyanophyceae</taxon>
        <taxon>Synechococcales</taxon>
        <taxon>Merismopediaceae</taxon>
        <taxon>Synechocystis</taxon>
    </lineage>
</organism>
<sequence length="359" mass="38815">MLDAVIILLSIFTFAGVGFAVVDLLPDSVQMQISNMEALRWLAAGFMSIIGLAIGLVAQTTYRRLENQIRQTPIETILTRAVGLVIGLLIANLMLAPIFLLPIPGEFSFIKPTLAVFGSVVFAFLGISLADTHGRTFMRLINPNSIETMLLAEGTLKPIPPKVVDTSCIIDGRIEPLLATGFIEGQVLVPQFVLAELQQLADASNDQKRVRGRRGLDILGSIQADFPESIVIHSADYDDIATVDAKLVHLAQEINGILLTNDYNLSKVANLQKVQILNVNDLAQAVRPIYLPGDSLELKIIKQGKEASQGVGYLEDGTMVVVEEGRNYVGSELQVIVTSALQTSAGRMIFAKPPSVLAS</sequence>
<dbReference type="EC" id="3.1.-.-"/>
<dbReference type="EMBL" id="BA000022">
    <property type="protein sequence ID" value="BAA18203.1"/>
    <property type="molecule type" value="Genomic_DNA"/>
</dbReference>
<dbReference type="PIR" id="S75642">
    <property type="entry name" value="S75642"/>
</dbReference>
<dbReference type="SMR" id="P74117"/>
<dbReference type="FunCoup" id="P74117">
    <property type="interactions" value="10"/>
</dbReference>
<dbReference type="STRING" id="1148.gene:10499076"/>
<dbReference type="PaxDb" id="1148-1653288"/>
<dbReference type="EnsemblBacteria" id="BAA18203">
    <property type="protein sequence ID" value="BAA18203"/>
    <property type="gene ID" value="BAA18203"/>
</dbReference>
<dbReference type="KEGG" id="syn:slr1972"/>
<dbReference type="eggNOG" id="COG4956">
    <property type="taxonomic scope" value="Bacteria"/>
</dbReference>
<dbReference type="InParanoid" id="P74117"/>
<dbReference type="PhylomeDB" id="P74117"/>
<dbReference type="Proteomes" id="UP000001425">
    <property type="component" value="Chromosome"/>
</dbReference>
<dbReference type="GO" id="GO:0046872">
    <property type="term" value="F:metal ion binding"/>
    <property type="evidence" value="ECO:0007669"/>
    <property type="project" value="UniProtKB-KW"/>
</dbReference>
<dbReference type="GO" id="GO:0004518">
    <property type="term" value="F:nuclease activity"/>
    <property type="evidence" value="ECO:0007669"/>
    <property type="project" value="UniProtKB-KW"/>
</dbReference>
<dbReference type="CDD" id="cd09877">
    <property type="entry name" value="PIN_YacL-like"/>
    <property type="match status" value="1"/>
</dbReference>
<dbReference type="Gene3D" id="3.40.50.1010">
    <property type="entry name" value="5'-nuclease"/>
    <property type="match status" value="1"/>
</dbReference>
<dbReference type="InterPro" id="IPR052041">
    <property type="entry name" value="Nucleic_acid_metab_PIN/TRAM"/>
</dbReference>
<dbReference type="InterPro" id="IPR029060">
    <property type="entry name" value="PIN-like_dom_sf"/>
</dbReference>
<dbReference type="InterPro" id="IPR002716">
    <property type="entry name" value="PIN_dom"/>
</dbReference>
<dbReference type="InterPro" id="IPR002792">
    <property type="entry name" value="TRAM_dom"/>
</dbReference>
<dbReference type="PANTHER" id="PTHR11603">
    <property type="entry name" value="AAA FAMILY ATPASE"/>
    <property type="match status" value="1"/>
</dbReference>
<dbReference type="PANTHER" id="PTHR11603:SF147">
    <property type="entry name" value="MEMBRANE PROTEIN"/>
    <property type="match status" value="1"/>
</dbReference>
<dbReference type="Pfam" id="PF01850">
    <property type="entry name" value="PIN"/>
    <property type="match status" value="1"/>
</dbReference>
<dbReference type="SMART" id="SM00670">
    <property type="entry name" value="PINc"/>
    <property type="match status" value="1"/>
</dbReference>
<dbReference type="SUPFAM" id="SSF88723">
    <property type="entry name" value="PIN domain-like"/>
    <property type="match status" value="1"/>
</dbReference>
<dbReference type="PROSITE" id="PS50926">
    <property type="entry name" value="TRAM"/>
    <property type="match status" value="1"/>
</dbReference>
<name>Y1972_SYNY3</name>
<reference key="1">
    <citation type="journal article" date="1996" name="DNA Res.">
        <title>Sequence analysis of the genome of the unicellular cyanobacterium Synechocystis sp. strain PCC6803. II. Sequence determination of the entire genome and assignment of potential protein-coding regions.</title>
        <authorList>
            <person name="Kaneko T."/>
            <person name="Sato S."/>
            <person name="Kotani H."/>
            <person name="Tanaka A."/>
            <person name="Asamizu E."/>
            <person name="Nakamura Y."/>
            <person name="Miyajima N."/>
            <person name="Hirosawa M."/>
            <person name="Sugiura M."/>
            <person name="Sasamoto S."/>
            <person name="Kimura T."/>
            <person name="Hosouchi T."/>
            <person name="Matsuno A."/>
            <person name="Muraki A."/>
            <person name="Nakazaki N."/>
            <person name="Naruo K."/>
            <person name="Okumura S."/>
            <person name="Shimpo S."/>
            <person name="Takeuchi C."/>
            <person name="Wada T."/>
            <person name="Watanabe A."/>
            <person name="Yamada M."/>
            <person name="Yasuda M."/>
            <person name="Tabata S."/>
        </authorList>
    </citation>
    <scope>NUCLEOTIDE SEQUENCE [LARGE SCALE GENOMIC DNA]</scope>
    <source>
        <strain>ATCC 27184 / PCC 6803 / Kazusa</strain>
    </source>
</reference>
<gene>
    <name type="ordered locus">slr1972</name>
</gene>
<protein>
    <recommendedName>
        <fullName>Uncharacterized PIN and TRAM-domain containing protein slr1972</fullName>
    </recommendedName>
    <alternativeName>
        <fullName>Putative RNase slr1972</fullName>
        <ecNumber>3.1.-.-</ecNumber>
    </alternativeName>
</protein>
<keyword id="KW-0378">Hydrolase</keyword>
<keyword id="KW-0460">Magnesium</keyword>
<keyword id="KW-0479">Metal-binding</keyword>
<keyword id="KW-0540">Nuclease</keyword>
<keyword id="KW-1185">Reference proteome</keyword>
<proteinExistence type="inferred from homology"/>
<accession>P74117</accession>
<feature type="chain" id="PRO_0000217411" description="Uncharacterized PIN and TRAM-domain containing protein slr1972">
    <location>
        <begin position="1"/>
        <end position="359"/>
    </location>
</feature>
<feature type="domain" description="PINc">
    <location>
        <begin position="163"/>
        <end position="275"/>
    </location>
</feature>
<feature type="domain" description="TRAM" evidence="2">
    <location>
        <begin position="289"/>
        <end position="350"/>
    </location>
</feature>
<feature type="binding site" evidence="1">
    <location>
        <position position="165"/>
    </location>
    <ligand>
        <name>Mg(2+)</name>
        <dbReference type="ChEBI" id="CHEBI:18420"/>
    </ligand>
</feature>
<feature type="binding site" evidence="1">
    <location>
        <position position="244"/>
    </location>
    <ligand>
        <name>Mg(2+)</name>
        <dbReference type="ChEBI" id="CHEBI:18420"/>
    </ligand>
</feature>